<proteinExistence type="inferred from homology"/>
<comment type="function">
    <text evidence="1">Endonuclease that specifically degrades the RNA of RNA-DNA hybrids.</text>
</comment>
<comment type="catalytic activity">
    <reaction evidence="1">
        <text>Endonucleolytic cleavage to 5'-phosphomonoester.</text>
        <dbReference type="EC" id="3.1.26.4"/>
    </reaction>
</comment>
<comment type="cofactor">
    <cofactor evidence="1">
        <name>Mn(2+)</name>
        <dbReference type="ChEBI" id="CHEBI:29035"/>
    </cofactor>
    <cofactor evidence="1">
        <name>Mg(2+)</name>
        <dbReference type="ChEBI" id="CHEBI:18420"/>
    </cofactor>
    <text evidence="1">Manganese or magnesium. Binds 1 divalent metal ion per monomer in the absence of substrate. May bind a second metal ion after substrate binding.</text>
</comment>
<comment type="subcellular location">
    <subcellularLocation>
        <location evidence="1">Cytoplasm</location>
    </subcellularLocation>
</comment>
<comment type="similarity">
    <text evidence="1">Belongs to the RNase HII family.</text>
</comment>
<protein>
    <recommendedName>
        <fullName evidence="1">Ribonuclease HII</fullName>
        <shortName evidence="1">RNase HII</shortName>
        <ecNumber evidence="1">3.1.26.4</ecNumber>
    </recommendedName>
</protein>
<keyword id="KW-0963">Cytoplasm</keyword>
<keyword id="KW-0255">Endonuclease</keyword>
<keyword id="KW-0378">Hydrolase</keyword>
<keyword id="KW-0464">Manganese</keyword>
<keyword id="KW-0479">Metal-binding</keyword>
<keyword id="KW-0540">Nuclease</keyword>
<keyword id="KW-1185">Reference proteome</keyword>
<organism>
    <name type="scientific">Thermus thermophilus (strain ATCC 27634 / DSM 579 / HB8)</name>
    <dbReference type="NCBI Taxonomy" id="300852"/>
    <lineage>
        <taxon>Bacteria</taxon>
        <taxon>Thermotogati</taxon>
        <taxon>Deinococcota</taxon>
        <taxon>Deinococci</taxon>
        <taxon>Thermales</taxon>
        <taxon>Thermaceae</taxon>
        <taxon>Thermus</taxon>
    </lineage>
</organism>
<sequence>MAEGPLEAPFWRKGLLVAGLDEAGRGAWAGPIVVGAVVLPPGEYPFRDSKLLSPKARERLAEKVKEVALAFALGVAEAAEVDRLGVLKATLLAAERALLSLPLAPEALVTDYLPLPTPLPLLSPPKADEKSPTVAAASILAKVHRDRIMDELDRLYPGYGFARHKGYGTQEHQEALLALGPSPVHRKRFAPVAQAPLRFPEAP</sequence>
<evidence type="ECO:0000255" key="1">
    <source>
        <dbReference type="HAMAP-Rule" id="MF_00052"/>
    </source>
</evidence>
<evidence type="ECO:0000255" key="2">
    <source>
        <dbReference type="PROSITE-ProRule" id="PRU01319"/>
    </source>
</evidence>
<feature type="chain" id="PRO_0000111645" description="Ribonuclease HII">
    <location>
        <begin position="1"/>
        <end position="203"/>
    </location>
</feature>
<feature type="domain" description="RNase H type-2" evidence="2">
    <location>
        <begin position="15"/>
        <end position="201"/>
    </location>
</feature>
<feature type="binding site" evidence="1">
    <location>
        <position position="21"/>
    </location>
    <ligand>
        <name>a divalent metal cation</name>
        <dbReference type="ChEBI" id="CHEBI:60240"/>
    </ligand>
</feature>
<feature type="binding site" evidence="1">
    <location>
        <position position="22"/>
    </location>
    <ligand>
        <name>a divalent metal cation</name>
        <dbReference type="ChEBI" id="CHEBI:60240"/>
    </ligand>
</feature>
<feature type="binding site" evidence="1">
    <location>
        <position position="111"/>
    </location>
    <ligand>
        <name>a divalent metal cation</name>
        <dbReference type="ChEBI" id="CHEBI:60240"/>
    </ligand>
</feature>
<name>RNH2_THET8</name>
<gene>
    <name evidence="1" type="primary">rnhB</name>
    <name type="ordered locus">TTHA0198</name>
</gene>
<reference key="1">
    <citation type="submission" date="2004-11" db="EMBL/GenBank/DDBJ databases">
        <title>Complete genome sequence of Thermus thermophilus HB8.</title>
        <authorList>
            <person name="Masui R."/>
            <person name="Kurokawa K."/>
            <person name="Nakagawa N."/>
            <person name="Tokunaga F."/>
            <person name="Koyama Y."/>
            <person name="Shibata T."/>
            <person name="Oshima T."/>
            <person name="Yokoyama S."/>
            <person name="Yasunaga T."/>
            <person name="Kuramitsu S."/>
        </authorList>
    </citation>
    <scope>NUCLEOTIDE SEQUENCE [LARGE SCALE GENOMIC DNA]</scope>
    <source>
        <strain>ATCC 27634 / DSM 579 / HB8</strain>
    </source>
</reference>
<accession>Q5SLU5</accession>
<dbReference type="EC" id="3.1.26.4" evidence="1"/>
<dbReference type="EMBL" id="AP008226">
    <property type="protein sequence ID" value="BAD70021.1"/>
    <property type="molecule type" value="Genomic_DNA"/>
</dbReference>
<dbReference type="RefSeq" id="WP_011227771.1">
    <property type="nucleotide sequence ID" value="NC_006461.1"/>
</dbReference>
<dbReference type="RefSeq" id="YP_143464.1">
    <property type="nucleotide sequence ID" value="NC_006461.1"/>
</dbReference>
<dbReference type="SMR" id="Q5SLU5"/>
<dbReference type="EnsemblBacteria" id="BAD70021">
    <property type="protein sequence ID" value="BAD70021"/>
    <property type="gene ID" value="BAD70021"/>
</dbReference>
<dbReference type="GeneID" id="3168603"/>
<dbReference type="KEGG" id="ttj:TTHA0198"/>
<dbReference type="PATRIC" id="fig|300852.9.peg.196"/>
<dbReference type="eggNOG" id="COG0164">
    <property type="taxonomic scope" value="Bacteria"/>
</dbReference>
<dbReference type="HOGENOM" id="CLU_036532_3_0_0"/>
<dbReference type="PhylomeDB" id="Q5SLU5"/>
<dbReference type="Proteomes" id="UP000000532">
    <property type="component" value="Chromosome"/>
</dbReference>
<dbReference type="GO" id="GO:0005737">
    <property type="term" value="C:cytoplasm"/>
    <property type="evidence" value="ECO:0007669"/>
    <property type="project" value="UniProtKB-SubCell"/>
</dbReference>
<dbReference type="GO" id="GO:0032299">
    <property type="term" value="C:ribonuclease H2 complex"/>
    <property type="evidence" value="ECO:0007669"/>
    <property type="project" value="TreeGrafter"/>
</dbReference>
<dbReference type="GO" id="GO:0030145">
    <property type="term" value="F:manganese ion binding"/>
    <property type="evidence" value="ECO:0007669"/>
    <property type="project" value="UniProtKB-UniRule"/>
</dbReference>
<dbReference type="GO" id="GO:0003723">
    <property type="term" value="F:RNA binding"/>
    <property type="evidence" value="ECO:0007669"/>
    <property type="project" value="InterPro"/>
</dbReference>
<dbReference type="GO" id="GO:0004523">
    <property type="term" value="F:RNA-DNA hybrid ribonuclease activity"/>
    <property type="evidence" value="ECO:0007669"/>
    <property type="project" value="UniProtKB-UniRule"/>
</dbReference>
<dbReference type="GO" id="GO:0043137">
    <property type="term" value="P:DNA replication, removal of RNA primer"/>
    <property type="evidence" value="ECO:0007669"/>
    <property type="project" value="TreeGrafter"/>
</dbReference>
<dbReference type="GO" id="GO:0006298">
    <property type="term" value="P:mismatch repair"/>
    <property type="evidence" value="ECO:0007669"/>
    <property type="project" value="TreeGrafter"/>
</dbReference>
<dbReference type="CDD" id="cd07182">
    <property type="entry name" value="RNase_HII_bacteria_HII_like"/>
    <property type="match status" value="1"/>
</dbReference>
<dbReference type="Gene3D" id="3.30.420.10">
    <property type="entry name" value="Ribonuclease H-like superfamily/Ribonuclease H"/>
    <property type="match status" value="1"/>
</dbReference>
<dbReference type="HAMAP" id="MF_00052_B">
    <property type="entry name" value="RNase_HII_B"/>
    <property type="match status" value="1"/>
</dbReference>
<dbReference type="InterPro" id="IPR022898">
    <property type="entry name" value="RNase_HII"/>
</dbReference>
<dbReference type="InterPro" id="IPR001352">
    <property type="entry name" value="RNase_HII/HIII"/>
</dbReference>
<dbReference type="InterPro" id="IPR024567">
    <property type="entry name" value="RNase_HII/HIII_dom"/>
</dbReference>
<dbReference type="InterPro" id="IPR012337">
    <property type="entry name" value="RNaseH-like_sf"/>
</dbReference>
<dbReference type="InterPro" id="IPR036397">
    <property type="entry name" value="RNaseH_sf"/>
</dbReference>
<dbReference type="NCBIfam" id="NF000595">
    <property type="entry name" value="PRK00015.1-3"/>
    <property type="match status" value="1"/>
</dbReference>
<dbReference type="NCBIfam" id="NF010538">
    <property type="entry name" value="PRK13926.1"/>
    <property type="match status" value="1"/>
</dbReference>
<dbReference type="PANTHER" id="PTHR10954">
    <property type="entry name" value="RIBONUCLEASE H2 SUBUNIT A"/>
    <property type="match status" value="1"/>
</dbReference>
<dbReference type="PANTHER" id="PTHR10954:SF18">
    <property type="entry name" value="RIBONUCLEASE HII"/>
    <property type="match status" value="1"/>
</dbReference>
<dbReference type="Pfam" id="PF01351">
    <property type="entry name" value="RNase_HII"/>
    <property type="match status" value="1"/>
</dbReference>
<dbReference type="SUPFAM" id="SSF53098">
    <property type="entry name" value="Ribonuclease H-like"/>
    <property type="match status" value="1"/>
</dbReference>
<dbReference type="PROSITE" id="PS51975">
    <property type="entry name" value="RNASE_H_2"/>
    <property type="match status" value="1"/>
</dbReference>